<accession>Q88RZ3</accession>
<accession>F9ULK5</accession>
<proteinExistence type="inferred from homology"/>
<feature type="chain" id="PRO_0000213635" description="Putative ribose uptake protein RbsU">
    <location>
        <begin position="1"/>
        <end position="294"/>
    </location>
</feature>
<feature type="transmembrane region" description="Helical" evidence="2">
    <location>
        <begin position="5"/>
        <end position="24"/>
    </location>
</feature>
<feature type="transmembrane region" description="Helical" evidence="2">
    <location>
        <begin position="34"/>
        <end position="56"/>
    </location>
</feature>
<feature type="transmembrane region" description="Helical" evidence="2">
    <location>
        <begin position="61"/>
        <end position="80"/>
    </location>
</feature>
<feature type="transmembrane region" description="Helical" evidence="2">
    <location>
        <begin position="90"/>
        <end position="112"/>
    </location>
</feature>
<feature type="transmembrane region" description="Helical" evidence="2">
    <location>
        <begin position="121"/>
        <end position="138"/>
    </location>
</feature>
<feature type="transmembrane region" description="Helical" evidence="2">
    <location>
        <begin position="153"/>
        <end position="170"/>
    </location>
</feature>
<feature type="transmembrane region" description="Helical" evidence="2">
    <location>
        <begin position="182"/>
        <end position="204"/>
    </location>
</feature>
<feature type="transmembrane region" description="Helical" evidence="2">
    <location>
        <begin position="214"/>
        <end position="236"/>
    </location>
</feature>
<feature type="transmembrane region" description="Helical" evidence="2">
    <location>
        <begin position="243"/>
        <end position="265"/>
    </location>
</feature>
<feature type="transmembrane region" description="Helical" evidence="2">
    <location>
        <begin position="275"/>
        <end position="292"/>
    </location>
</feature>
<dbReference type="EMBL" id="AL935263">
    <property type="protein sequence ID" value="CCC80612.1"/>
    <property type="molecule type" value="Genomic_DNA"/>
</dbReference>
<dbReference type="RefSeq" id="WP_003641602.1">
    <property type="nucleotide sequence ID" value="NC_004567.2"/>
</dbReference>
<dbReference type="RefSeq" id="YP_004891126.1">
    <property type="nucleotide sequence ID" value="NC_004567.2"/>
</dbReference>
<dbReference type="STRING" id="220668.lp_3658"/>
<dbReference type="EnsemblBacteria" id="CCC80612">
    <property type="protein sequence ID" value="CCC80612"/>
    <property type="gene ID" value="lp_3658"/>
</dbReference>
<dbReference type="KEGG" id="lpl:lp_3658"/>
<dbReference type="PATRIC" id="fig|220668.9.peg.3056"/>
<dbReference type="eggNOG" id="COG4975">
    <property type="taxonomic scope" value="Bacteria"/>
</dbReference>
<dbReference type="HOGENOM" id="CLU_076024_0_1_9"/>
<dbReference type="OrthoDB" id="1452595at2"/>
<dbReference type="PhylomeDB" id="Q88RZ3"/>
<dbReference type="Proteomes" id="UP000000432">
    <property type="component" value="Chromosome"/>
</dbReference>
<dbReference type="GO" id="GO:0005886">
    <property type="term" value="C:plasma membrane"/>
    <property type="evidence" value="ECO:0007669"/>
    <property type="project" value="UniProtKB-SubCell"/>
</dbReference>
<dbReference type="GO" id="GO:0015144">
    <property type="term" value="F:carbohydrate transmembrane transporter activity"/>
    <property type="evidence" value="ECO:0007669"/>
    <property type="project" value="InterPro"/>
</dbReference>
<dbReference type="CDD" id="cd23111">
    <property type="entry name" value="ribose_uptake_RbsU"/>
    <property type="match status" value="1"/>
</dbReference>
<dbReference type="InterPro" id="IPR010651">
    <property type="entry name" value="Sugar_transport"/>
</dbReference>
<dbReference type="NCBIfam" id="NF047342">
    <property type="entry name" value="symport_RbsU"/>
    <property type="match status" value="1"/>
</dbReference>
<dbReference type="PANTHER" id="PTHR16119">
    <property type="entry name" value="TRANSMEMBRANE PROTEIN 144"/>
    <property type="match status" value="1"/>
</dbReference>
<dbReference type="PANTHER" id="PTHR16119:SF17">
    <property type="entry name" value="TRANSMEMBRANE PROTEIN 144"/>
    <property type="match status" value="1"/>
</dbReference>
<dbReference type="Pfam" id="PF06800">
    <property type="entry name" value="Sugar_transport"/>
    <property type="match status" value="1"/>
</dbReference>
<dbReference type="SUPFAM" id="SSF103481">
    <property type="entry name" value="Multidrug resistance efflux transporter EmrE"/>
    <property type="match status" value="1"/>
</dbReference>
<name>RBSU_LACPL</name>
<comment type="function">
    <text evidence="1">Could be involved in the uptake of ribose.</text>
</comment>
<comment type="subcellular location">
    <subcellularLocation>
        <location evidence="3">Cell membrane</location>
        <topology evidence="3">Multi-pass membrane protein</topology>
    </subcellularLocation>
</comment>
<comment type="similarity">
    <text evidence="3">Belongs to the GRP transporter (TC 2.A.7.5) family.</text>
</comment>
<sequence length="294" mass="31049">MNTTALLIGLGPLLGWGLYPTIASKIGGRPVNQILGSTIGTLIFALIYAWVQGIAFPSGMNLWFSILSGIGWASAQIVTFKVFTMVGSSRAMPITTAFQLLGASLWGVFALGDWPGAMDKVLGGLALVGIIIGAWLTVWSEHKDAGNARTLRQAVIWLAVGEIGYWAYSAAPQATNIGGEEAFVPQAIGMVIVSIVYALFLASRGEKLALVEGVSYTHIISGFFFAFAALTYLISAQPNMNGLATGFILSQTSVVLATLTGIWFLGQKKTTKEMWVTIGGLILIIAAAAVTVTI</sequence>
<gene>
    <name type="primary">rbsU</name>
    <name type="ordered locus">lp_3658</name>
</gene>
<keyword id="KW-1003">Cell membrane</keyword>
<keyword id="KW-0472">Membrane</keyword>
<keyword id="KW-1185">Reference proteome</keyword>
<keyword id="KW-0762">Sugar transport</keyword>
<keyword id="KW-0812">Transmembrane</keyword>
<keyword id="KW-1133">Transmembrane helix</keyword>
<keyword id="KW-0813">Transport</keyword>
<evidence type="ECO:0000250" key="1"/>
<evidence type="ECO:0000255" key="2"/>
<evidence type="ECO:0000305" key="3"/>
<reference key="1">
    <citation type="journal article" date="2003" name="Proc. Natl. Acad. Sci. U.S.A.">
        <title>Complete genome sequence of Lactobacillus plantarum WCFS1.</title>
        <authorList>
            <person name="Kleerebezem M."/>
            <person name="Boekhorst J."/>
            <person name="van Kranenburg R."/>
            <person name="Molenaar D."/>
            <person name="Kuipers O.P."/>
            <person name="Leer R."/>
            <person name="Tarchini R."/>
            <person name="Peters S.A."/>
            <person name="Sandbrink H.M."/>
            <person name="Fiers M.W.E.J."/>
            <person name="Stiekema W."/>
            <person name="Klein Lankhorst R.M."/>
            <person name="Bron P.A."/>
            <person name="Hoffer S.M."/>
            <person name="Nierop Groot M.N."/>
            <person name="Kerkhoven R."/>
            <person name="De Vries M."/>
            <person name="Ursing B."/>
            <person name="De Vos W.M."/>
            <person name="Siezen R.J."/>
        </authorList>
    </citation>
    <scope>NUCLEOTIDE SEQUENCE [LARGE SCALE GENOMIC DNA]</scope>
    <source>
        <strain>ATCC BAA-793 / NCIMB 8826 / WCFS1</strain>
    </source>
</reference>
<reference key="2">
    <citation type="journal article" date="2012" name="J. Bacteriol.">
        <title>Complete resequencing and reannotation of the Lactobacillus plantarum WCFS1 genome.</title>
        <authorList>
            <person name="Siezen R.J."/>
            <person name="Francke C."/>
            <person name="Renckens B."/>
            <person name="Boekhorst J."/>
            <person name="Wels M."/>
            <person name="Kleerebezem M."/>
            <person name="van Hijum S.A."/>
        </authorList>
    </citation>
    <scope>NUCLEOTIDE SEQUENCE [LARGE SCALE GENOMIC DNA]</scope>
    <scope>GENOME REANNOTATION</scope>
    <source>
        <strain>ATCC BAA-793 / NCIMB 8826 / WCFS1</strain>
    </source>
</reference>
<organism>
    <name type="scientific">Lactiplantibacillus plantarum (strain ATCC BAA-793 / NCIMB 8826 / WCFS1)</name>
    <name type="common">Lactobacillus plantarum</name>
    <dbReference type="NCBI Taxonomy" id="220668"/>
    <lineage>
        <taxon>Bacteria</taxon>
        <taxon>Bacillati</taxon>
        <taxon>Bacillota</taxon>
        <taxon>Bacilli</taxon>
        <taxon>Lactobacillales</taxon>
        <taxon>Lactobacillaceae</taxon>
        <taxon>Lactiplantibacillus</taxon>
    </lineage>
</organism>
<protein>
    <recommendedName>
        <fullName>Putative ribose uptake protein RbsU</fullName>
    </recommendedName>
</protein>